<protein>
    <recommendedName>
        <fullName evidence="1">Putative septation protein SpoVG</fullName>
    </recommendedName>
</protein>
<evidence type="ECO:0000255" key="1">
    <source>
        <dbReference type="HAMAP-Rule" id="MF_00819"/>
    </source>
</evidence>
<gene>
    <name evidence="1" type="primary">spoVG</name>
    <name type="ordered locus">SACOL0541</name>
</gene>
<reference key="1">
    <citation type="journal article" date="2005" name="J. Bacteriol.">
        <title>Insights on evolution of virulence and resistance from the complete genome analysis of an early methicillin-resistant Staphylococcus aureus strain and a biofilm-producing methicillin-resistant Staphylococcus epidermidis strain.</title>
        <authorList>
            <person name="Gill S.R."/>
            <person name="Fouts D.E."/>
            <person name="Archer G.L."/>
            <person name="Mongodin E.F."/>
            <person name="DeBoy R.T."/>
            <person name="Ravel J."/>
            <person name="Paulsen I.T."/>
            <person name="Kolonay J.F."/>
            <person name="Brinkac L.M."/>
            <person name="Beanan M.J."/>
            <person name="Dodson R.J."/>
            <person name="Daugherty S.C."/>
            <person name="Madupu R."/>
            <person name="Angiuoli S.V."/>
            <person name="Durkin A.S."/>
            <person name="Haft D.H."/>
            <person name="Vamathevan J.J."/>
            <person name="Khouri H."/>
            <person name="Utterback T.R."/>
            <person name="Lee C."/>
            <person name="Dimitrov G."/>
            <person name="Jiang L."/>
            <person name="Qin H."/>
            <person name="Weidman J."/>
            <person name="Tran K."/>
            <person name="Kang K.H."/>
            <person name="Hance I.R."/>
            <person name="Nelson K.E."/>
            <person name="Fraser C.M."/>
        </authorList>
    </citation>
    <scope>NUCLEOTIDE SEQUENCE [LARGE SCALE GENOMIC DNA]</scope>
    <source>
        <strain>COL</strain>
    </source>
</reference>
<dbReference type="EMBL" id="CP000046">
    <property type="protein sequence ID" value="AAW36318.1"/>
    <property type="molecule type" value="Genomic_DNA"/>
</dbReference>
<dbReference type="RefSeq" id="WP_000868999.1">
    <property type="nucleotide sequence ID" value="NZ_JBGOFO010000012.1"/>
</dbReference>
<dbReference type="SMR" id="Q5HIH8"/>
<dbReference type="KEGG" id="sac:SACOL0541"/>
<dbReference type="HOGENOM" id="CLU_103669_2_1_9"/>
<dbReference type="Proteomes" id="UP000000530">
    <property type="component" value="Chromosome"/>
</dbReference>
<dbReference type="GO" id="GO:0000917">
    <property type="term" value="P:division septum assembly"/>
    <property type="evidence" value="ECO:0007669"/>
    <property type="project" value="UniProtKB-KW"/>
</dbReference>
<dbReference type="GO" id="GO:0030435">
    <property type="term" value="P:sporulation resulting in formation of a cellular spore"/>
    <property type="evidence" value="ECO:0007669"/>
    <property type="project" value="InterPro"/>
</dbReference>
<dbReference type="Gene3D" id="3.30.1120.40">
    <property type="entry name" value="Stage V sporulation protein G"/>
    <property type="match status" value="1"/>
</dbReference>
<dbReference type="HAMAP" id="MF_00819">
    <property type="entry name" value="SpoVG"/>
    <property type="match status" value="1"/>
</dbReference>
<dbReference type="InterPro" id="IPR007170">
    <property type="entry name" value="SpoVG"/>
</dbReference>
<dbReference type="InterPro" id="IPR036751">
    <property type="entry name" value="SpoVG_sf"/>
</dbReference>
<dbReference type="NCBIfam" id="NF009749">
    <property type="entry name" value="PRK13259.1"/>
    <property type="match status" value="1"/>
</dbReference>
<dbReference type="PANTHER" id="PTHR38429">
    <property type="entry name" value="SEPTATION PROTEIN SPOVG-RELATED"/>
    <property type="match status" value="1"/>
</dbReference>
<dbReference type="PANTHER" id="PTHR38429:SF1">
    <property type="entry name" value="SEPTATION PROTEIN SPOVG-RELATED"/>
    <property type="match status" value="1"/>
</dbReference>
<dbReference type="Pfam" id="PF04026">
    <property type="entry name" value="SpoVG"/>
    <property type="match status" value="1"/>
</dbReference>
<dbReference type="SUPFAM" id="SSF160537">
    <property type="entry name" value="SpoVG-like"/>
    <property type="match status" value="1"/>
</dbReference>
<accession>Q5HIH8</accession>
<keyword id="KW-0131">Cell cycle</keyword>
<keyword id="KW-0132">Cell division</keyword>
<keyword id="KW-0717">Septation</keyword>
<name>SP5G_STAAC</name>
<organism>
    <name type="scientific">Staphylococcus aureus (strain COL)</name>
    <dbReference type="NCBI Taxonomy" id="93062"/>
    <lineage>
        <taxon>Bacteria</taxon>
        <taxon>Bacillati</taxon>
        <taxon>Bacillota</taxon>
        <taxon>Bacilli</taxon>
        <taxon>Bacillales</taxon>
        <taxon>Staphylococcaceae</taxon>
        <taxon>Staphylococcus</taxon>
    </lineage>
</organism>
<feature type="chain" id="PRO_0000157205" description="Putative septation protein SpoVG">
    <location>
        <begin position="1"/>
        <end position="100"/>
    </location>
</feature>
<comment type="function">
    <text evidence="1">Could be involved in septation.</text>
</comment>
<comment type="similarity">
    <text evidence="1">Belongs to the SpoVG family.</text>
</comment>
<sequence length="100" mass="11278">MKVTDVRLRKIQTDGRMKALVSITLDEAFVIHDLRVIEGNSGLFVAMPSKRTPDGEFRDIAHPINSDMRQEIQDAVMKVYDETDEVVPDKNATSEDSEEA</sequence>
<proteinExistence type="inferred from homology"/>